<gene>
    <name type="ordered locus">Patl_3954</name>
</gene>
<evidence type="ECO:0000255" key="1">
    <source>
        <dbReference type="HAMAP-Rule" id="MF_00672"/>
    </source>
</evidence>
<name>Y3954_PSEA6</name>
<organism>
    <name type="scientific">Pseudoalteromonas atlantica (strain T6c / ATCC BAA-1087)</name>
    <dbReference type="NCBI Taxonomy" id="3042615"/>
    <lineage>
        <taxon>Bacteria</taxon>
        <taxon>Pseudomonadati</taxon>
        <taxon>Pseudomonadota</taxon>
        <taxon>Gammaproteobacteria</taxon>
        <taxon>Alteromonadales</taxon>
        <taxon>Alteromonadaceae</taxon>
        <taxon>Paraglaciecola</taxon>
    </lineage>
</organism>
<proteinExistence type="inferred from homology"/>
<sequence>MESKVIWSDVLRSWLPKANIFVRMFVNHCQRDGITVSAGHLAYVSLLSLVPFIMVFFTILSAFPAFSEVRGDIEALIFGNFIPTSGDQIQGYVAEFVGNASKMGAIGILSLVVVALLLISNIDKTLNRIWQAKSERPIIFTFAIYWMILTLGPLLIGLSVIMSSYLVAFANSAEAYTMGATTAMLKIVPFIASVCAFFILYMIVPNKRINPRHALVGAFMGALLFELSKKGFSFYITHFPSYQMIYGAMAVIPILFVWVYLSWIVVLLGAELTHVIEVFFHEESKENFTQVDEDDPQSPA</sequence>
<accession>Q15NT4</accession>
<protein>
    <recommendedName>
        <fullName evidence="1">UPF0761 membrane protein Patl_3954</fullName>
    </recommendedName>
</protein>
<comment type="subcellular location">
    <subcellularLocation>
        <location evidence="1">Cell inner membrane</location>
        <topology evidence="1">Multi-pass membrane protein</topology>
    </subcellularLocation>
</comment>
<comment type="similarity">
    <text evidence="1">Belongs to the UPF0761 family.</text>
</comment>
<feature type="chain" id="PRO_0000391046" description="UPF0761 membrane protein Patl_3954">
    <location>
        <begin position="1"/>
        <end position="300"/>
    </location>
</feature>
<feature type="transmembrane region" description="Helical" evidence="1">
    <location>
        <begin position="46"/>
        <end position="66"/>
    </location>
</feature>
<feature type="transmembrane region" description="Helical" evidence="1">
    <location>
        <begin position="103"/>
        <end position="123"/>
    </location>
</feature>
<feature type="transmembrane region" description="Helical" evidence="1">
    <location>
        <begin position="138"/>
        <end position="158"/>
    </location>
</feature>
<feature type="transmembrane region" description="Helical" evidence="1">
    <location>
        <begin position="184"/>
        <end position="204"/>
    </location>
</feature>
<feature type="transmembrane region" description="Helical" evidence="1">
    <location>
        <begin position="214"/>
        <end position="234"/>
    </location>
</feature>
<feature type="transmembrane region" description="Helical" evidence="1">
    <location>
        <begin position="248"/>
        <end position="268"/>
    </location>
</feature>
<keyword id="KW-0997">Cell inner membrane</keyword>
<keyword id="KW-1003">Cell membrane</keyword>
<keyword id="KW-0472">Membrane</keyword>
<keyword id="KW-0812">Transmembrane</keyword>
<keyword id="KW-1133">Transmembrane helix</keyword>
<reference key="1">
    <citation type="submission" date="2006-06" db="EMBL/GenBank/DDBJ databases">
        <title>Complete sequence of Pseudoalteromonas atlantica T6c.</title>
        <authorList>
            <consortium name="US DOE Joint Genome Institute"/>
            <person name="Copeland A."/>
            <person name="Lucas S."/>
            <person name="Lapidus A."/>
            <person name="Barry K."/>
            <person name="Detter J.C."/>
            <person name="Glavina del Rio T."/>
            <person name="Hammon N."/>
            <person name="Israni S."/>
            <person name="Dalin E."/>
            <person name="Tice H."/>
            <person name="Pitluck S."/>
            <person name="Saunders E."/>
            <person name="Brettin T."/>
            <person name="Bruce D."/>
            <person name="Han C."/>
            <person name="Tapia R."/>
            <person name="Gilna P."/>
            <person name="Schmutz J."/>
            <person name="Larimer F."/>
            <person name="Land M."/>
            <person name="Hauser L."/>
            <person name="Kyrpides N."/>
            <person name="Kim E."/>
            <person name="Karls A.C."/>
            <person name="Bartlett D."/>
            <person name="Higgins B.P."/>
            <person name="Richardson P."/>
        </authorList>
    </citation>
    <scope>NUCLEOTIDE SEQUENCE [LARGE SCALE GENOMIC DNA]</scope>
    <source>
        <strain>T6c / ATCC BAA-1087</strain>
    </source>
</reference>
<dbReference type="EMBL" id="CP000388">
    <property type="protein sequence ID" value="ABG42454.1"/>
    <property type="molecule type" value="Genomic_DNA"/>
</dbReference>
<dbReference type="RefSeq" id="WP_011576658.1">
    <property type="nucleotide sequence ID" value="NC_008228.1"/>
</dbReference>
<dbReference type="STRING" id="342610.Patl_3954"/>
<dbReference type="KEGG" id="pat:Patl_3954"/>
<dbReference type="eggNOG" id="COG1295">
    <property type="taxonomic scope" value="Bacteria"/>
</dbReference>
<dbReference type="HOGENOM" id="CLU_032288_0_0_6"/>
<dbReference type="OrthoDB" id="9808671at2"/>
<dbReference type="Proteomes" id="UP000001981">
    <property type="component" value="Chromosome"/>
</dbReference>
<dbReference type="GO" id="GO:0005886">
    <property type="term" value="C:plasma membrane"/>
    <property type="evidence" value="ECO:0007669"/>
    <property type="project" value="UniProtKB-SubCell"/>
</dbReference>
<dbReference type="HAMAP" id="MF_00672">
    <property type="entry name" value="UPF0761"/>
    <property type="match status" value="1"/>
</dbReference>
<dbReference type="InterPro" id="IPR023679">
    <property type="entry name" value="UPF0761_bac"/>
</dbReference>
<dbReference type="InterPro" id="IPR017039">
    <property type="entry name" value="Virul_fac_BrkB"/>
</dbReference>
<dbReference type="NCBIfam" id="NF002457">
    <property type="entry name" value="PRK01637.1"/>
    <property type="match status" value="1"/>
</dbReference>
<dbReference type="NCBIfam" id="TIGR00765">
    <property type="entry name" value="yihY_not_rbn"/>
    <property type="match status" value="1"/>
</dbReference>
<dbReference type="PANTHER" id="PTHR30213">
    <property type="entry name" value="INNER MEMBRANE PROTEIN YHJD"/>
    <property type="match status" value="1"/>
</dbReference>
<dbReference type="PANTHER" id="PTHR30213:SF0">
    <property type="entry name" value="UPF0761 MEMBRANE PROTEIN YIHY"/>
    <property type="match status" value="1"/>
</dbReference>
<dbReference type="Pfam" id="PF03631">
    <property type="entry name" value="Virul_fac_BrkB"/>
    <property type="match status" value="1"/>
</dbReference>
<dbReference type="PIRSF" id="PIRSF035875">
    <property type="entry name" value="RNase_BN"/>
    <property type="match status" value="1"/>
</dbReference>